<organism>
    <name type="scientific">Acinetobacter baylyi (strain ATCC 33305 / BD413 / ADP1)</name>
    <dbReference type="NCBI Taxonomy" id="62977"/>
    <lineage>
        <taxon>Bacteria</taxon>
        <taxon>Pseudomonadati</taxon>
        <taxon>Pseudomonadota</taxon>
        <taxon>Gammaproteobacteria</taxon>
        <taxon>Moraxellales</taxon>
        <taxon>Moraxellaceae</taxon>
        <taxon>Acinetobacter</taxon>
    </lineage>
</organism>
<protein>
    <recommendedName>
        <fullName evidence="1">tRNA pseudouridine synthase A</fullName>
        <ecNumber evidence="1">5.4.99.12</ecNumber>
    </recommendedName>
    <alternativeName>
        <fullName evidence="1">tRNA pseudouridine(38-40) synthase</fullName>
    </alternativeName>
    <alternativeName>
        <fullName evidence="1">tRNA pseudouridylate synthase I</fullName>
    </alternativeName>
    <alternativeName>
        <fullName evidence="1">tRNA-uridine isomerase I</fullName>
    </alternativeName>
</protein>
<comment type="function">
    <text evidence="1">Formation of pseudouridine at positions 38, 39 and 40 in the anticodon stem and loop of transfer RNAs.</text>
</comment>
<comment type="catalytic activity">
    <reaction evidence="1">
        <text>uridine(38/39/40) in tRNA = pseudouridine(38/39/40) in tRNA</text>
        <dbReference type="Rhea" id="RHEA:22376"/>
        <dbReference type="Rhea" id="RHEA-COMP:10085"/>
        <dbReference type="Rhea" id="RHEA-COMP:10087"/>
        <dbReference type="ChEBI" id="CHEBI:65314"/>
        <dbReference type="ChEBI" id="CHEBI:65315"/>
        <dbReference type="EC" id="5.4.99.12"/>
    </reaction>
</comment>
<comment type="subunit">
    <text evidence="1">Homodimer.</text>
</comment>
<comment type="similarity">
    <text evidence="1">Belongs to the tRNA pseudouridine synthase TruA family.</text>
</comment>
<evidence type="ECO:0000255" key="1">
    <source>
        <dbReference type="HAMAP-Rule" id="MF_00171"/>
    </source>
</evidence>
<gene>
    <name evidence="1" type="primary">truA</name>
    <name type="ordered locus">ACIAD0474</name>
</gene>
<proteinExistence type="inferred from homology"/>
<dbReference type="EC" id="5.4.99.12" evidence="1"/>
<dbReference type="EMBL" id="CR543861">
    <property type="protein sequence ID" value="CAG67406.1"/>
    <property type="molecule type" value="Genomic_DNA"/>
</dbReference>
<dbReference type="SMR" id="Q6FEV2"/>
<dbReference type="STRING" id="202950.GCA_001485005_00720"/>
<dbReference type="KEGG" id="aci:ACIAD0474"/>
<dbReference type="eggNOG" id="COG0101">
    <property type="taxonomic scope" value="Bacteria"/>
</dbReference>
<dbReference type="HOGENOM" id="CLU_014673_0_2_6"/>
<dbReference type="Proteomes" id="UP000000430">
    <property type="component" value="Chromosome"/>
</dbReference>
<dbReference type="GO" id="GO:0003723">
    <property type="term" value="F:RNA binding"/>
    <property type="evidence" value="ECO:0007669"/>
    <property type="project" value="InterPro"/>
</dbReference>
<dbReference type="GO" id="GO:0160147">
    <property type="term" value="F:tRNA pseudouridine(38-40) synthase activity"/>
    <property type="evidence" value="ECO:0007669"/>
    <property type="project" value="UniProtKB-EC"/>
</dbReference>
<dbReference type="GO" id="GO:0031119">
    <property type="term" value="P:tRNA pseudouridine synthesis"/>
    <property type="evidence" value="ECO:0007669"/>
    <property type="project" value="UniProtKB-UniRule"/>
</dbReference>
<dbReference type="CDD" id="cd02570">
    <property type="entry name" value="PseudoU_synth_EcTruA"/>
    <property type="match status" value="1"/>
</dbReference>
<dbReference type="FunFam" id="3.30.70.580:FF:000001">
    <property type="entry name" value="tRNA pseudouridine synthase A"/>
    <property type="match status" value="1"/>
</dbReference>
<dbReference type="Gene3D" id="3.30.70.660">
    <property type="entry name" value="Pseudouridine synthase I, catalytic domain, C-terminal subdomain"/>
    <property type="match status" value="1"/>
</dbReference>
<dbReference type="Gene3D" id="3.30.70.580">
    <property type="entry name" value="Pseudouridine synthase I, catalytic domain, N-terminal subdomain"/>
    <property type="match status" value="1"/>
</dbReference>
<dbReference type="HAMAP" id="MF_00171">
    <property type="entry name" value="TruA"/>
    <property type="match status" value="1"/>
</dbReference>
<dbReference type="InterPro" id="IPR020103">
    <property type="entry name" value="PsdUridine_synth_cat_dom_sf"/>
</dbReference>
<dbReference type="InterPro" id="IPR001406">
    <property type="entry name" value="PsdUridine_synth_TruA"/>
</dbReference>
<dbReference type="InterPro" id="IPR020097">
    <property type="entry name" value="PsdUridine_synth_TruA_a/b_dom"/>
</dbReference>
<dbReference type="InterPro" id="IPR020095">
    <property type="entry name" value="PsdUridine_synth_TruA_C"/>
</dbReference>
<dbReference type="InterPro" id="IPR020094">
    <property type="entry name" value="TruA/RsuA/RluB/E/F_N"/>
</dbReference>
<dbReference type="NCBIfam" id="TIGR00071">
    <property type="entry name" value="hisT_truA"/>
    <property type="match status" value="1"/>
</dbReference>
<dbReference type="PANTHER" id="PTHR11142">
    <property type="entry name" value="PSEUDOURIDYLATE SYNTHASE"/>
    <property type="match status" value="1"/>
</dbReference>
<dbReference type="PANTHER" id="PTHR11142:SF0">
    <property type="entry name" value="TRNA PSEUDOURIDINE SYNTHASE-LIKE 1"/>
    <property type="match status" value="1"/>
</dbReference>
<dbReference type="Pfam" id="PF01416">
    <property type="entry name" value="PseudoU_synth_1"/>
    <property type="match status" value="2"/>
</dbReference>
<dbReference type="PIRSF" id="PIRSF001430">
    <property type="entry name" value="tRNA_psdUrid_synth"/>
    <property type="match status" value="1"/>
</dbReference>
<dbReference type="SUPFAM" id="SSF55120">
    <property type="entry name" value="Pseudouridine synthase"/>
    <property type="match status" value="1"/>
</dbReference>
<sequence length="271" mass="31008">MMQRYAVGIEFCGIRYRGWQTQQAGVPSIQETIEKVLSKIADEPIILHGAGRTDAGVHATNMVAHFDTNAIRPQRGWLMGANSQLPKDISIQWIKEMNTDFHARFKATARRYRYVVYNTLNRPALLHKQVTHVYQTLDVDKMMLAARKFEGTHNFETFRAASCQSSQPVRHLSHCRLTRHGRYLVLDIQADGFLHHMVRNIMGCLLEIGQGCYEIEHIDTMFAAQDRKAAGVTAPADGLYFIQAYYPEHFELPQHPLGPHWLNLPDEIPNI</sequence>
<name>TRUA_ACIAD</name>
<reference key="1">
    <citation type="journal article" date="2004" name="Nucleic Acids Res.">
        <title>Unique features revealed by the genome sequence of Acinetobacter sp. ADP1, a versatile and naturally transformation competent bacterium.</title>
        <authorList>
            <person name="Barbe V."/>
            <person name="Vallenet D."/>
            <person name="Fonknechten N."/>
            <person name="Kreimeyer A."/>
            <person name="Oztas S."/>
            <person name="Labarre L."/>
            <person name="Cruveiller S."/>
            <person name="Robert C."/>
            <person name="Duprat S."/>
            <person name="Wincker P."/>
            <person name="Ornston L.N."/>
            <person name="Weissenbach J."/>
            <person name="Marliere P."/>
            <person name="Cohen G.N."/>
            <person name="Medigue C."/>
        </authorList>
    </citation>
    <scope>NUCLEOTIDE SEQUENCE [LARGE SCALE GENOMIC DNA]</scope>
    <source>
        <strain>ATCC 33305 / BD413 / ADP1</strain>
    </source>
</reference>
<keyword id="KW-0413">Isomerase</keyword>
<keyword id="KW-0819">tRNA processing</keyword>
<accession>Q6FEV2</accession>
<feature type="chain" id="PRO_0000057313" description="tRNA pseudouridine synthase A">
    <location>
        <begin position="1"/>
        <end position="271"/>
    </location>
</feature>
<feature type="active site" description="Nucleophile" evidence="1">
    <location>
        <position position="54"/>
    </location>
</feature>
<feature type="binding site" evidence="1">
    <location>
        <position position="112"/>
    </location>
    <ligand>
        <name>substrate</name>
    </ligand>
</feature>